<proteinExistence type="inferred from homology"/>
<dbReference type="EC" id="3.6.1.54" evidence="1"/>
<dbReference type="EMBL" id="AP008229">
    <property type="protein sequence ID" value="BAE70224.1"/>
    <property type="molecule type" value="Genomic_DNA"/>
</dbReference>
<dbReference type="RefSeq" id="WP_011260108.1">
    <property type="nucleotide sequence ID" value="NC_007705.1"/>
</dbReference>
<dbReference type="SMR" id="Q2NZQ3"/>
<dbReference type="KEGG" id="xom:XOO3469"/>
<dbReference type="HOGENOM" id="CLU_074586_0_0_6"/>
<dbReference type="UniPathway" id="UPA00359">
    <property type="reaction ID" value="UER00480"/>
</dbReference>
<dbReference type="GO" id="GO:0005737">
    <property type="term" value="C:cytoplasm"/>
    <property type="evidence" value="ECO:0007669"/>
    <property type="project" value="InterPro"/>
</dbReference>
<dbReference type="GO" id="GO:0019897">
    <property type="term" value="C:extrinsic component of plasma membrane"/>
    <property type="evidence" value="ECO:0007669"/>
    <property type="project" value="UniProtKB-UniRule"/>
</dbReference>
<dbReference type="GO" id="GO:0030145">
    <property type="term" value="F:manganese ion binding"/>
    <property type="evidence" value="ECO:0007669"/>
    <property type="project" value="UniProtKB-UniRule"/>
</dbReference>
<dbReference type="GO" id="GO:0008758">
    <property type="term" value="F:UDP-2,3-diacylglucosamine hydrolase activity"/>
    <property type="evidence" value="ECO:0007669"/>
    <property type="project" value="UniProtKB-UniRule"/>
</dbReference>
<dbReference type="GO" id="GO:0009245">
    <property type="term" value="P:lipid A biosynthetic process"/>
    <property type="evidence" value="ECO:0007669"/>
    <property type="project" value="UniProtKB-UniRule"/>
</dbReference>
<dbReference type="CDD" id="cd07398">
    <property type="entry name" value="MPP_YbbF-LpxH"/>
    <property type="match status" value="1"/>
</dbReference>
<dbReference type="Gene3D" id="3.60.21.10">
    <property type="match status" value="1"/>
</dbReference>
<dbReference type="HAMAP" id="MF_00575">
    <property type="entry name" value="LpxH"/>
    <property type="match status" value="1"/>
</dbReference>
<dbReference type="InterPro" id="IPR004843">
    <property type="entry name" value="Calcineurin-like_PHP_ApaH"/>
</dbReference>
<dbReference type="InterPro" id="IPR043461">
    <property type="entry name" value="LpxH-like"/>
</dbReference>
<dbReference type="InterPro" id="IPR029052">
    <property type="entry name" value="Metallo-depent_PP-like"/>
</dbReference>
<dbReference type="InterPro" id="IPR010138">
    <property type="entry name" value="UDP-diacylglucosamine_Hdrlase"/>
</dbReference>
<dbReference type="NCBIfam" id="TIGR01854">
    <property type="entry name" value="lipid_A_lpxH"/>
    <property type="match status" value="1"/>
</dbReference>
<dbReference type="NCBIfam" id="NF003743">
    <property type="entry name" value="PRK05340.1"/>
    <property type="match status" value="1"/>
</dbReference>
<dbReference type="PANTHER" id="PTHR34990:SF1">
    <property type="entry name" value="UDP-2,3-DIACYLGLUCOSAMINE HYDROLASE"/>
    <property type="match status" value="1"/>
</dbReference>
<dbReference type="PANTHER" id="PTHR34990">
    <property type="entry name" value="UDP-2,3-DIACYLGLUCOSAMINE HYDROLASE-RELATED"/>
    <property type="match status" value="1"/>
</dbReference>
<dbReference type="Pfam" id="PF00149">
    <property type="entry name" value="Metallophos"/>
    <property type="match status" value="1"/>
</dbReference>
<dbReference type="SUPFAM" id="SSF56300">
    <property type="entry name" value="Metallo-dependent phosphatases"/>
    <property type="match status" value="1"/>
</dbReference>
<comment type="function">
    <text evidence="1">Hydrolyzes the pyrophosphate bond of UDP-2,3-diacylglucosamine to yield 2,3-diacylglucosamine 1-phosphate (lipid X) and UMP by catalyzing the attack of water at the alpha-P atom. Involved in the biosynthesis of lipid A, a phosphorylated glycolipid that anchors the lipopolysaccharide to the outer membrane of the cell.</text>
</comment>
<comment type="catalytic activity">
    <reaction evidence="1">
        <text>UDP-2-N,3-O-bis[(3R)-3-hydroxytetradecanoyl]-alpha-D-glucosamine + H2O = 2-N,3-O-bis[(3R)-3-hydroxytetradecanoyl]-alpha-D-glucosaminyl 1-phosphate + UMP + 2 H(+)</text>
        <dbReference type="Rhea" id="RHEA:25213"/>
        <dbReference type="ChEBI" id="CHEBI:15377"/>
        <dbReference type="ChEBI" id="CHEBI:15378"/>
        <dbReference type="ChEBI" id="CHEBI:57865"/>
        <dbReference type="ChEBI" id="CHEBI:57957"/>
        <dbReference type="ChEBI" id="CHEBI:78847"/>
        <dbReference type="EC" id="3.6.1.54"/>
    </reaction>
</comment>
<comment type="cofactor">
    <cofactor evidence="1">
        <name>Mn(2+)</name>
        <dbReference type="ChEBI" id="CHEBI:29035"/>
    </cofactor>
    <text evidence="1">Binds 2 Mn(2+) ions per subunit in a binuclear metal center.</text>
</comment>
<comment type="pathway">
    <text evidence="1">Glycolipid biosynthesis; lipid IV(A) biosynthesis; lipid IV(A) from (3R)-3-hydroxytetradecanoyl-[acyl-carrier-protein] and UDP-N-acetyl-alpha-D-glucosamine: step 4/6.</text>
</comment>
<comment type="subcellular location">
    <subcellularLocation>
        <location evidence="1">Cell inner membrane</location>
        <topology evidence="1">Peripheral membrane protein</topology>
        <orientation evidence="1">Cytoplasmic side</orientation>
    </subcellularLocation>
</comment>
<comment type="similarity">
    <text evidence="1">Belongs to the LpxH family.</text>
</comment>
<evidence type="ECO:0000255" key="1">
    <source>
        <dbReference type="HAMAP-Rule" id="MF_00575"/>
    </source>
</evidence>
<keyword id="KW-0997">Cell inner membrane</keyword>
<keyword id="KW-1003">Cell membrane</keyword>
<keyword id="KW-0378">Hydrolase</keyword>
<keyword id="KW-0441">Lipid A biosynthesis</keyword>
<keyword id="KW-0444">Lipid biosynthesis</keyword>
<keyword id="KW-0443">Lipid metabolism</keyword>
<keyword id="KW-0464">Manganese</keyword>
<keyword id="KW-0472">Membrane</keyword>
<keyword id="KW-0479">Metal-binding</keyword>
<reference key="1">
    <citation type="journal article" date="2005" name="Jpn. Agric. Res. Q.">
        <title>Genome sequence of Xanthomonas oryzae pv. oryzae suggests contribution of large numbers of effector genes and insertion sequences to its race diversity.</title>
        <authorList>
            <person name="Ochiai H."/>
            <person name="Inoue Y."/>
            <person name="Takeya M."/>
            <person name="Sasaki A."/>
            <person name="Kaku H."/>
        </authorList>
    </citation>
    <scope>NUCLEOTIDE SEQUENCE [LARGE SCALE GENOMIC DNA]</scope>
    <source>
        <strain>MAFF 311018</strain>
    </source>
</reference>
<feature type="chain" id="PRO_1000025097" description="UDP-2,3-diacylglucosamine hydrolase">
    <location>
        <begin position="1"/>
        <end position="247"/>
    </location>
</feature>
<feature type="binding site" evidence="1">
    <location>
        <position position="8"/>
    </location>
    <ligand>
        <name>Mn(2+)</name>
        <dbReference type="ChEBI" id="CHEBI:29035"/>
        <label>1</label>
    </ligand>
</feature>
<feature type="binding site" evidence="1">
    <location>
        <position position="10"/>
    </location>
    <ligand>
        <name>Mn(2+)</name>
        <dbReference type="ChEBI" id="CHEBI:29035"/>
        <label>1</label>
    </ligand>
</feature>
<feature type="binding site" evidence="1">
    <location>
        <position position="41"/>
    </location>
    <ligand>
        <name>Mn(2+)</name>
        <dbReference type="ChEBI" id="CHEBI:29035"/>
        <label>1</label>
    </ligand>
</feature>
<feature type="binding site" evidence="1">
    <location>
        <position position="41"/>
    </location>
    <ligand>
        <name>Mn(2+)</name>
        <dbReference type="ChEBI" id="CHEBI:29035"/>
        <label>2</label>
    </ligand>
</feature>
<feature type="binding site" evidence="1">
    <location>
        <begin position="79"/>
        <end position="80"/>
    </location>
    <ligand>
        <name>substrate</name>
    </ligand>
</feature>
<feature type="binding site" evidence="1">
    <location>
        <position position="79"/>
    </location>
    <ligand>
        <name>Mn(2+)</name>
        <dbReference type="ChEBI" id="CHEBI:29035"/>
        <label>2</label>
    </ligand>
</feature>
<feature type="binding site" evidence="1">
    <location>
        <position position="114"/>
    </location>
    <ligand>
        <name>Mn(2+)</name>
        <dbReference type="ChEBI" id="CHEBI:29035"/>
        <label>2</label>
    </ligand>
</feature>
<feature type="binding site" evidence="1">
    <location>
        <position position="122"/>
    </location>
    <ligand>
        <name>substrate</name>
    </ligand>
</feature>
<feature type="binding site" evidence="1">
    <location>
        <position position="160"/>
    </location>
    <ligand>
        <name>substrate</name>
    </ligand>
</feature>
<feature type="binding site" evidence="1">
    <location>
        <position position="171"/>
    </location>
    <ligand>
        <name>substrate</name>
    </ligand>
</feature>
<feature type="binding site" evidence="1">
    <location>
        <position position="174"/>
    </location>
    <ligand>
        <name>substrate</name>
    </ligand>
</feature>
<feature type="binding site" evidence="1">
    <location>
        <position position="202"/>
    </location>
    <ligand>
        <name>Mn(2+)</name>
        <dbReference type="ChEBI" id="CHEBI:29035"/>
        <label>2</label>
    </ligand>
</feature>
<feature type="binding site" evidence="1">
    <location>
        <position position="202"/>
    </location>
    <ligand>
        <name>substrate</name>
    </ligand>
</feature>
<feature type="binding site" evidence="1">
    <location>
        <position position="204"/>
    </location>
    <ligand>
        <name>Mn(2+)</name>
        <dbReference type="ChEBI" id="CHEBI:29035"/>
        <label>1</label>
    </ligand>
</feature>
<protein>
    <recommendedName>
        <fullName evidence="1">UDP-2,3-diacylglucosamine hydrolase</fullName>
        <ecNumber evidence="1">3.6.1.54</ecNumber>
    </recommendedName>
    <alternativeName>
        <fullName evidence="1">UDP-2,3-diacylglucosamine diphosphatase</fullName>
    </alternativeName>
</protein>
<gene>
    <name evidence="1" type="primary">lpxH</name>
    <name type="ordered locus">XOO3469</name>
</gene>
<sequence>MTTLFISDLHLDPARPAITELFLDFLRTQVRGSDALYILGDLFEAWIGDDTPSTAADAVAVALHAVADAGVPVFFMAGNRDFLVGETYAQRAGFRILPDPTVIDLYGHTTLLMHGDLLCTDDTAYQAFRAQTRDPVFQAQFLAQPLAARVAFAQQARAASQARHAELKQGDQSNVETVTDVSPAEVEATFVRYGLDRLIHGHTHRPAIHTVQAGGNTCTRIVLGDWYEQGSVLRLDADGVSLEQFAL</sequence>
<accession>Q2NZQ3</accession>
<name>LPXH_XANOM</name>
<organism>
    <name type="scientific">Xanthomonas oryzae pv. oryzae (strain MAFF 311018)</name>
    <dbReference type="NCBI Taxonomy" id="342109"/>
    <lineage>
        <taxon>Bacteria</taxon>
        <taxon>Pseudomonadati</taxon>
        <taxon>Pseudomonadota</taxon>
        <taxon>Gammaproteobacteria</taxon>
        <taxon>Lysobacterales</taxon>
        <taxon>Lysobacteraceae</taxon>
        <taxon>Xanthomonas</taxon>
    </lineage>
</organism>